<evidence type="ECO:0000255" key="1">
    <source>
        <dbReference type="HAMAP-Rule" id="MF_00237"/>
    </source>
</evidence>
<evidence type="ECO:0000256" key="2">
    <source>
        <dbReference type="SAM" id="MobiDB-lite"/>
    </source>
</evidence>
<accession>Q1R004</accession>
<reference key="1">
    <citation type="journal article" date="2011" name="Stand. Genomic Sci.">
        <title>Complete genome sequence of the halophilic and highly halotolerant Chromohalobacter salexigens type strain (1H11(T)).</title>
        <authorList>
            <person name="Copeland A."/>
            <person name="O'Connor K."/>
            <person name="Lucas S."/>
            <person name="Lapidus A."/>
            <person name="Berry K.W."/>
            <person name="Detter J.C."/>
            <person name="Del Rio T.G."/>
            <person name="Hammon N."/>
            <person name="Dalin E."/>
            <person name="Tice H."/>
            <person name="Pitluck S."/>
            <person name="Bruce D."/>
            <person name="Goodwin L."/>
            <person name="Han C."/>
            <person name="Tapia R."/>
            <person name="Saunders E."/>
            <person name="Schmutz J."/>
            <person name="Brettin T."/>
            <person name="Larimer F."/>
            <person name="Land M."/>
            <person name="Hauser L."/>
            <person name="Vargas C."/>
            <person name="Nieto J.J."/>
            <person name="Kyrpides N.C."/>
            <person name="Ivanova N."/>
            <person name="Goker M."/>
            <person name="Klenk H.P."/>
            <person name="Csonka L.N."/>
            <person name="Woyke T."/>
        </authorList>
    </citation>
    <scope>NUCLEOTIDE SEQUENCE [LARGE SCALE GENOMIC DNA]</scope>
    <source>
        <strain>ATCC BAA-138 / DSM 3043 / CIP 106854 / NCIMB 13768 / 1H11</strain>
    </source>
</reference>
<sequence>MFDMGFLELMLIGVVALLVLGPERLPTAARTVGLWVGKIKRTVSGMQREISAQLEAEELRQKLNEQQRKLDAGLGKVRDEVERHGDAPSSRGGQPPPSRTTPTAARSADDTDETPPSTAASRETPEPPAAPSAKDSNAP</sequence>
<keyword id="KW-0997">Cell inner membrane</keyword>
<keyword id="KW-1003">Cell membrane</keyword>
<keyword id="KW-0472">Membrane</keyword>
<keyword id="KW-0653">Protein transport</keyword>
<keyword id="KW-1185">Reference proteome</keyword>
<keyword id="KW-0811">Translocation</keyword>
<keyword id="KW-0812">Transmembrane</keyword>
<keyword id="KW-1133">Transmembrane helix</keyword>
<keyword id="KW-0813">Transport</keyword>
<gene>
    <name evidence="1" type="primary">tatB</name>
    <name type="ordered locus">Csal_0592</name>
</gene>
<name>TATB_CHRSD</name>
<comment type="function">
    <text evidence="1">Part of the twin-arginine translocation (Tat) system that transports large folded proteins containing a characteristic twin-arginine motif in their signal peptide across membranes. Together with TatC, TatB is part of a receptor directly interacting with Tat signal peptides. TatB may form an oligomeric binding site that transiently accommodates folded Tat precursor proteins before their translocation.</text>
</comment>
<comment type="subunit">
    <text evidence="1">The Tat system comprises two distinct complexes: a TatABC complex, containing multiple copies of TatA, TatB and TatC subunits, and a separate TatA complex, containing only TatA subunits. Substrates initially bind to the TatABC complex, which probably triggers association of the separate TatA complex to form the active translocon.</text>
</comment>
<comment type="subcellular location">
    <subcellularLocation>
        <location evidence="1">Cell inner membrane</location>
        <topology evidence="1">Single-pass membrane protein</topology>
    </subcellularLocation>
</comment>
<comment type="similarity">
    <text evidence="1">Belongs to the TatB family.</text>
</comment>
<dbReference type="EMBL" id="CP000285">
    <property type="protein sequence ID" value="ABE57954.1"/>
    <property type="molecule type" value="Genomic_DNA"/>
</dbReference>
<dbReference type="RefSeq" id="WP_011505900.1">
    <property type="nucleotide sequence ID" value="NC_007963.1"/>
</dbReference>
<dbReference type="SMR" id="Q1R004"/>
<dbReference type="STRING" id="290398.Csal_0592"/>
<dbReference type="GeneID" id="95333347"/>
<dbReference type="KEGG" id="csa:Csal_0592"/>
<dbReference type="eggNOG" id="COG1826">
    <property type="taxonomic scope" value="Bacteria"/>
</dbReference>
<dbReference type="HOGENOM" id="CLU_086034_1_1_6"/>
<dbReference type="OrthoDB" id="9816005at2"/>
<dbReference type="Proteomes" id="UP000000239">
    <property type="component" value="Chromosome"/>
</dbReference>
<dbReference type="GO" id="GO:0033281">
    <property type="term" value="C:TAT protein transport complex"/>
    <property type="evidence" value="ECO:0007669"/>
    <property type="project" value="UniProtKB-UniRule"/>
</dbReference>
<dbReference type="GO" id="GO:0008320">
    <property type="term" value="F:protein transmembrane transporter activity"/>
    <property type="evidence" value="ECO:0007669"/>
    <property type="project" value="UniProtKB-UniRule"/>
</dbReference>
<dbReference type="GO" id="GO:0043953">
    <property type="term" value="P:protein transport by the Tat complex"/>
    <property type="evidence" value="ECO:0007669"/>
    <property type="project" value="UniProtKB-UniRule"/>
</dbReference>
<dbReference type="Gene3D" id="1.20.5.3310">
    <property type="match status" value="1"/>
</dbReference>
<dbReference type="HAMAP" id="MF_00237">
    <property type="entry name" value="TatB"/>
    <property type="match status" value="1"/>
</dbReference>
<dbReference type="InterPro" id="IPR003369">
    <property type="entry name" value="TatA/B/E"/>
</dbReference>
<dbReference type="InterPro" id="IPR018448">
    <property type="entry name" value="TatB"/>
</dbReference>
<dbReference type="NCBIfam" id="TIGR01410">
    <property type="entry name" value="tatB"/>
    <property type="match status" value="1"/>
</dbReference>
<dbReference type="PANTHER" id="PTHR33162">
    <property type="entry name" value="SEC-INDEPENDENT PROTEIN TRANSLOCASE PROTEIN TATA, CHLOROPLASTIC"/>
    <property type="match status" value="1"/>
</dbReference>
<dbReference type="PANTHER" id="PTHR33162:SF1">
    <property type="entry name" value="SEC-INDEPENDENT PROTEIN TRANSLOCASE PROTEIN TATA, CHLOROPLASTIC"/>
    <property type="match status" value="1"/>
</dbReference>
<dbReference type="Pfam" id="PF02416">
    <property type="entry name" value="TatA_B_E"/>
    <property type="match status" value="1"/>
</dbReference>
<dbReference type="PRINTS" id="PR01506">
    <property type="entry name" value="TATBPROTEIN"/>
</dbReference>
<organism>
    <name type="scientific">Chromohalobacter salexigens (strain ATCC BAA-138 / DSM 3043 / CIP 106854 / NCIMB 13768 / 1H11)</name>
    <dbReference type="NCBI Taxonomy" id="290398"/>
    <lineage>
        <taxon>Bacteria</taxon>
        <taxon>Pseudomonadati</taxon>
        <taxon>Pseudomonadota</taxon>
        <taxon>Gammaproteobacteria</taxon>
        <taxon>Oceanospirillales</taxon>
        <taxon>Halomonadaceae</taxon>
        <taxon>Chromohalobacter</taxon>
    </lineage>
</organism>
<protein>
    <recommendedName>
        <fullName evidence="1">Sec-independent protein translocase protein TatB</fullName>
    </recommendedName>
</protein>
<proteinExistence type="inferred from homology"/>
<feature type="chain" id="PRO_0000301161" description="Sec-independent protein translocase protein TatB">
    <location>
        <begin position="1"/>
        <end position="139"/>
    </location>
</feature>
<feature type="transmembrane region" description="Helical" evidence="1">
    <location>
        <begin position="1"/>
        <end position="21"/>
    </location>
</feature>
<feature type="region of interest" description="Disordered" evidence="2">
    <location>
        <begin position="66"/>
        <end position="139"/>
    </location>
</feature>
<feature type="compositionally biased region" description="Basic and acidic residues" evidence="2">
    <location>
        <begin position="66"/>
        <end position="86"/>
    </location>
</feature>